<dbReference type="EC" id="2.7.1.50" evidence="1"/>
<dbReference type="EMBL" id="AE017355">
    <property type="protein sequence ID" value="AAT59005.1"/>
    <property type="molecule type" value="Genomic_DNA"/>
</dbReference>
<dbReference type="RefSeq" id="WP_001092692.1">
    <property type="nucleotide sequence ID" value="NC_005957.1"/>
</dbReference>
<dbReference type="RefSeq" id="YP_034702.1">
    <property type="nucleotide sequence ID" value="NC_005957.1"/>
</dbReference>
<dbReference type="SMR" id="Q6HP18"/>
<dbReference type="KEGG" id="btk:BT9727_0352"/>
<dbReference type="PATRIC" id="fig|281309.8.peg.374"/>
<dbReference type="HOGENOM" id="CLU_019943_0_1_9"/>
<dbReference type="UniPathway" id="UPA00060">
    <property type="reaction ID" value="UER00139"/>
</dbReference>
<dbReference type="Proteomes" id="UP000001301">
    <property type="component" value="Chromosome"/>
</dbReference>
<dbReference type="GO" id="GO:0005524">
    <property type="term" value="F:ATP binding"/>
    <property type="evidence" value="ECO:0007669"/>
    <property type="project" value="UniProtKB-UniRule"/>
</dbReference>
<dbReference type="GO" id="GO:0004417">
    <property type="term" value="F:hydroxyethylthiazole kinase activity"/>
    <property type="evidence" value="ECO:0007669"/>
    <property type="project" value="UniProtKB-UniRule"/>
</dbReference>
<dbReference type="GO" id="GO:0000287">
    <property type="term" value="F:magnesium ion binding"/>
    <property type="evidence" value="ECO:0007669"/>
    <property type="project" value="UniProtKB-UniRule"/>
</dbReference>
<dbReference type="GO" id="GO:0009228">
    <property type="term" value="P:thiamine biosynthetic process"/>
    <property type="evidence" value="ECO:0007669"/>
    <property type="project" value="UniProtKB-KW"/>
</dbReference>
<dbReference type="GO" id="GO:0009229">
    <property type="term" value="P:thiamine diphosphate biosynthetic process"/>
    <property type="evidence" value="ECO:0007669"/>
    <property type="project" value="UniProtKB-UniRule"/>
</dbReference>
<dbReference type="CDD" id="cd01170">
    <property type="entry name" value="THZ_kinase"/>
    <property type="match status" value="1"/>
</dbReference>
<dbReference type="FunFam" id="3.40.1190.20:FF:000027">
    <property type="entry name" value="Hydroxyethylthiazole kinase"/>
    <property type="match status" value="1"/>
</dbReference>
<dbReference type="Gene3D" id="3.40.1190.20">
    <property type="match status" value="1"/>
</dbReference>
<dbReference type="HAMAP" id="MF_00228">
    <property type="entry name" value="Thz_kinase"/>
    <property type="match status" value="1"/>
</dbReference>
<dbReference type="InterPro" id="IPR000417">
    <property type="entry name" value="Hyethyz_kinase"/>
</dbReference>
<dbReference type="InterPro" id="IPR029056">
    <property type="entry name" value="Ribokinase-like"/>
</dbReference>
<dbReference type="NCBIfam" id="NF006830">
    <property type="entry name" value="PRK09355.1"/>
    <property type="match status" value="1"/>
</dbReference>
<dbReference type="NCBIfam" id="TIGR00694">
    <property type="entry name" value="thiM"/>
    <property type="match status" value="1"/>
</dbReference>
<dbReference type="Pfam" id="PF02110">
    <property type="entry name" value="HK"/>
    <property type="match status" value="1"/>
</dbReference>
<dbReference type="PIRSF" id="PIRSF000513">
    <property type="entry name" value="Thz_kinase"/>
    <property type="match status" value="1"/>
</dbReference>
<dbReference type="PRINTS" id="PR01099">
    <property type="entry name" value="HYETHTZKNASE"/>
</dbReference>
<dbReference type="SUPFAM" id="SSF53613">
    <property type="entry name" value="Ribokinase-like"/>
    <property type="match status" value="1"/>
</dbReference>
<keyword id="KW-0067">ATP-binding</keyword>
<keyword id="KW-0418">Kinase</keyword>
<keyword id="KW-0460">Magnesium</keyword>
<keyword id="KW-0479">Metal-binding</keyword>
<keyword id="KW-0547">Nucleotide-binding</keyword>
<keyword id="KW-0784">Thiamine biosynthesis</keyword>
<keyword id="KW-0808">Transferase</keyword>
<evidence type="ECO:0000255" key="1">
    <source>
        <dbReference type="HAMAP-Rule" id="MF_00228"/>
    </source>
</evidence>
<proteinExistence type="inferred from homology"/>
<reference key="1">
    <citation type="journal article" date="2006" name="J. Bacteriol.">
        <title>Pathogenomic sequence analysis of Bacillus cereus and Bacillus thuringiensis isolates closely related to Bacillus anthracis.</title>
        <authorList>
            <person name="Han C.S."/>
            <person name="Xie G."/>
            <person name="Challacombe J.F."/>
            <person name="Altherr M.R."/>
            <person name="Bhotika S.S."/>
            <person name="Bruce D."/>
            <person name="Campbell C.S."/>
            <person name="Campbell M.L."/>
            <person name="Chen J."/>
            <person name="Chertkov O."/>
            <person name="Cleland C."/>
            <person name="Dimitrijevic M."/>
            <person name="Doggett N.A."/>
            <person name="Fawcett J.J."/>
            <person name="Glavina T."/>
            <person name="Goodwin L.A."/>
            <person name="Hill K.K."/>
            <person name="Hitchcock P."/>
            <person name="Jackson P.J."/>
            <person name="Keim P."/>
            <person name="Kewalramani A.R."/>
            <person name="Longmire J."/>
            <person name="Lucas S."/>
            <person name="Malfatti S."/>
            <person name="McMurry K."/>
            <person name="Meincke L.J."/>
            <person name="Misra M."/>
            <person name="Moseman B.L."/>
            <person name="Mundt M."/>
            <person name="Munk A.C."/>
            <person name="Okinaka R.T."/>
            <person name="Parson-Quintana B."/>
            <person name="Reilly L.P."/>
            <person name="Richardson P."/>
            <person name="Robinson D.L."/>
            <person name="Rubin E."/>
            <person name="Saunders E."/>
            <person name="Tapia R."/>
            <person name="Tesmer J.G."/>
            <person name="Thayer N."/>
            <person name="Thompson L.S."/>
            <person name="Tice H."/>
            <person name="Ticknor L.O."/>
            <person name="Wills P.L."/>
            <person name="Brettin T.S."/>
            <person name="Gilna P."/>
        </authorList>
    </citation>
    <scope>NUCLEOTIDE SEQUENCE [LARGE SCALE GENOMIC DNA]</scope>
    <source>
        <strain>97-27</strain>
    </source>
</reference>
<accession>Q6HP18</accession>
<protein>
    <recommendedName>
        <fullName evidence="1">Hydroxyethylthiazole kinase</fullName>
        <ecNumber evidence="1">2.7.1.50</ecNumber>
    </recommendedName>
    <alternativeName>
        <fullName evidence="1">4-methyl-5-beta-hydroxyethylthiazole kinase</fullName>
        <shortName evidence="1">TH kinase</shortName>
        <shortName evidence="1">Thz kinase</shortName>
    </alternativeName>
</protein>
<sequence length="268" mass="28018">MNTKEISKVVDLVRESNPLVHNITNVVVTNFTANGLLALGASPVMAYAKEEVAEMASIAGALVLNMGTLRPDEVEAMLLAGKSANTNDVPVLFDPVGAGATSYRTEVARHIPAEIELAIIRGNAAEIANVINEKWEIKGVDAGVGNGNVVSIAKQAADELNTVAVITGKEDVVTDGERTIVIRNGHSILTKVTGTGCLLTSVIGAFVAVEKDYVKAAVAALTFYGVAAELAAAKTVEKGPGSFQIEFLNQLANTTSGDIEKYGKIEVI</sequence>
<comment type="function">
    <text evidence="1">Catalyzes the phosphorylation of the hydroxyl group of 4-methyl-5-beta-hydroxyethylthiazole (THZ).</text>
</comment>
<comment type="catalytic activity">
    <reaction evidence="1">
        <text>5-(2-hydroxyethyl)-4-methylthiazole + ATP = 4-methyl-5-(2-phosphooxyethyl)-thiazole + ADP + H(+)</text>
        <dbReference type="Rhea" id="RHEA:24212"/>
        <dbReference type="ChEBI" id="CHEBI:15378"/>
        <dbReference type="ChEBI" id="CHEBI:17957"/>
        <dbReference type="ChEBI" id="CHEBI:30616"/>
        <dbReference type="ChEBI" id="CHEBI:58296"/>
        <dbReference type="ChEBI" id="CHEBI:456216"/>
        <dbReference type="EC" id="2.7.1.50"/>
    </reaction>
</comment>
<comment type="cofactor">
    <cofactor evidence="1">
        <name>Mg(2+)</name>
        <dbReference type="ChEBI" id="CHEBI:18420"/>
    </cofactor>
</comment>
<comment type="pathway">
    <text evidence="1">Cofactor biosynthesis; thiamine diphosphate biosynthesis; 4-methyl-5-(2-phosphoethyl)-thiazole from 5-(2-hydroxyethyl)-4-methylthiazole: step 1/1.</text>
</comment>
<comment type="similarity">
    <text evidence="1">Belongs to the Thz kinase family.</text>
</comment>
<organism>
    <name type="scientific">Bacillus thuringiensis subsp. konkukian (strain 97-27)</name>
    <dbReference type="NCBI Taxonomy" id="281309"/>
    <lineage>
        <taxon>Bacteria</taxon>
        <taxon>Bacillati</taxon>
        <taxon>Bacillota</taxon>
        <taxon>Bacilli</taxon>
        <taxon>Bacillales</taxon>
        <taxon>Bacillaceae</taxon>
        <taxon>Bacillus</taxon>
        <taxon>Bacillus cereus group</taxon>
    </lineage>
</organism>
<gene>
    <name evidence="1" type="primary">thiM</name>
    <name type="ordered locus">BT9727_0352</name>
</gene>
<name>THIM_BACHK</name>
<feature type="chain" id="PRO_1000021500" description="Hydroxyethylthiazole kinase">
    <location>
        <begin position="1"/>
        <end position="268"/>
    </location>
</feature>
<feature type="binding site" evidence="1">
    <location>
        <position position="45"/>
    </location>
    <ligand>
        <name>substrate</name>
    </ligand>
</feature>
<feature type="binding site" evidence="1">
    <location>
        <position position="121"/>
    </location>
    <ligand>
        <name>ATP</name>
        <dbReference type="ChEBI" id="CHEBI:30616"/>
    </ligand>
</feature>
<feature type="binding site" evidence="1">
    <location>
        <position position="167"/>
    </location>
    <ligand>
        <name>ATP</name>
        <dbReference type="ChEBI" id="CHEBI:30616"/>
    </ligand>
</feature>
<feature type="binding site" evidence="1">
    <location>
        <position position="194"/>
    </location>
    <ligand>
        <name>substrate</name>
    </ligand>
</feature>